<keyword id="KW-0066">ATP synthesis</keyword>
<keyword id="KW-0067">ATP-binding</keyword>
<keyword id="KW-0997">Cell inner membrane</keyword>
<keyword id="KW-1003">Cell membrane</keyword>
<keyword id="KW-0139">CF(1)</keyword>
<keyword id="KW-0375">Hydrogen ion transport</keyword>
<keyword id="KW-0406">Ion transport</keyword>
<keyword id="KW-0472">Membrane</keyword>
<keyword id="KW-0547">Nucleotide-binding</keyword>
<keyword id="KW-1278">Translocase</keyword>
<keyword id="KW-0813">Transport</keyword>
<gene>
    <name evidence="1" type="primary">atpA</name>
    <name type="ordered locus">AM1174</name>
</gene>
<accession>Q5P9M4</accession>
<feature type="chain" id="PRO_0000238189" description="ATP synthase subunit alpha">
    <location>
        <begin position="1"/>
        <end position="507"/>
    </location>
</feature>
<feature type="binding site" evidence="1">
    <location>
        <begin position="170"/>
        <end position="177"/>
    </location>
    <ligand>
        <name>ATP</name>
        <dbReference type="ChEBI" id="CHEBI:30616"/>
    </ligand>
</feature>
<feature type="site" description="Required for activity" evidence="1">
    <location>
        <position position="371"/>
    </location>
</feature>
<proteinExistence type="inferred from homology"/>
<dbReference type="EC" id="7.1.2.2" evidence="1"/>
<dbReference type="EMBL" id="CP000030">
    <property type="protein sequence ID" value="AAV87006.1"/>
    <property type="molecule type" value="Genomic_DNA"/>
</dbReference>
<dbReference type="RefSeq" id="WP_010266218.1">
    <property type="nucleotide sequence ID" value="NZ_AFMU01000038.1"/>
</dbReference>
<dbReference type="SMR" id="Q5P9M4"/>
<dbReference type="GeneID" id="7398735"/>
<dbReference type="KEGG" id="ama:AM1174"/>
<dbReference type="PATRIC" id="fig|320483.3.peg.1019"/>
<dbReference type="HOGENOM" id="CLU_010091_2_1_5"/>
<dbReference type="GO" id="GO:0005886">
    <property type="term" value="C:plasma membrane"/>
    <property type="evidence" value="ECO:0007669"/>
    <property type="project" value="UniProtKB-SubCell"/>
</dbReference>
<dbReference type="GO" id="GO:0045259">
    <property type="term" value="C:proton-transporting ATP synthase complex"/>
    <property type="evidence" value="ECO:0007669"/>
    <property type="project" value="UniProtKB-KW"/>
</dbReference>
<dbReference type="GO" id="GO:0043531">
    <property type="term" value="F:ADP binding"/>
    <property type="evidence" value="ECO:0007669"/>
    <property type="project" value="TreeGrafter"/>
</dbReference>
<dbReference type="GO" id="GO:0005524">
    <property type="term" value="F:ATP binding"/>
    <property type="evidence" value="ECO:0007669"/>
    <property type="project" value="UniProtKB-UniRule"/>
</dbReference>
<dbReference type="GO" id="GO:0046933">
    <property type="term" value="F:proton-transporting ATP synthase activity, rotational mechanism"/>
    <property type="evidence" value="ECO:0007669"/>
    <property type="project" value="UniProtKB-UniRule"/>
</dbReference>
<dbReference type="CDD" id="cd18113">
    <property type="entry name" value="ATP-synt_F1_alpha_C"/>
    <property type="match status" value="1"/>
</dbReference>
<dbReference type="CDD" id="cd18116">
    <property type="entry name" value="ATP-synt_F1_alpha_N"/>
    <property type="match status" value="1"/>
</dbReference>
<dbReference type="CDD" id="cd01132">
    <property type="entry name" value="F1-ATPase_alpha_CD"/>
    <property type="match status" value="1"/>
</dbReference>
<dbReference type="FunFam" id="1.20.150.20:FF:000001">
    <property type="entry name" value="ATP synthase subunit alpha"/>
    <property type="match status" value="1"/>
</dbReference>
<dbReference type="FunFam" id="3.40.50.300:FF:002432">
    <property type="entry name" value="ATP synthase subunit alpha, mitochondrial"/>
    <property type="match status" value="1"/>
</dbReference>
<dbReference type="Gene3D" id="2.40.30.20">
    <property type="match status" value="1"/>
</dbReference>
<dbReference type="Gene3D" id="1.20.150.20">
    <property type="entry name" value="ATP synthase alpha/beta chain, C-terminal domain"/>
    <property type="match status" value="1"/>
</dbReference>
<dbReference type="Gene3D" id="3.40.50.300">
    <property type="entry name" value="P-loop containing nucleotide triphosphate hydrolases"/>
    <property type="match status" value="1"/>
</dbReference>
<dbReference type="HAMAP" id="MF_01346">
    <property type="entry name" value="ATP_synth_alpha_bact"/>
    <property type="match status" value="1"/>
</dbReference>
<dbReference type="InterPro" id="IPR023366">
    <property type="entry name" value="ATP_synth_asu-like_sf"/>
</dbReference>
<dbReference type="InterPro" id="IPR000793">
    <property type="entry name" value="ATP_synth_asu_C"/>
</dbReference>
<dbReference type="InterPro" id="IPR038376">
    <property type="entry name" value="ATP_synth_asu_C_sf"/>
</dbReference>
<dbReference type="InterPro" id="IPR033732">
    <property type="entry name" value="ATP_synth_F1_a_nt-bd_dom"/>
</dbReference>
<dbReference type="InterPro" id="IPR005294">
    <property type="entry name" value="ATP_synth_F1_asu"/>
</dbReference>
<dbReference type="InterPro" id="IPR020003">
    <property type="entry name" value="ATPase_a/bsu_AS"/>
</dbReference>
<dbReference type="InterPro" id="IPR004100">
    <property type="entry name" value="ATPase_F1/V1/A1_a/bsu_N"/>
</dbReference>
<dbReference type="InterPro" id="IPR036121">
    <property type="entry name" value="ATPase_F1/V1/A1_a/bsu_N_sf"/>
</dbReference>
<dbReference type="InterPro" id="IPR000194">
    <property type="entry name" value="ATPase_F1/V1/A1_a/bsu_nucl-bd"/>
</dbReference>
<dbReference type="InterPro" id="IPR027417">
    <property type="entry name" value="P-loop_NTPase"/>
</dbReference>
<dbReference type="NCBIfam" id="TIGR00962">
    <property type="entry name" value="atpA"/>
    <property type="match status" value="1"/>
</dbReference>
<dbReference type="NCBIfam" id="NF009884">
    <property type="entry name" value="PRK13343.1"/>
    <property type="match status" value="1"/>
</dbReference>
<dbReference type="PANTHER" id="PTHR48082">
    <property type="entry name" value="ATP SYNTHASE SUBUNIT ALPHA, MITOCHONDRIAL"/>
    <property type="match status" value="1"/>
</dbReference>
<dbReference type="PANTHER" id="PTHR48082:SF2">
    <property type="entry name" value="ATP SYNTHASE SUBUNIT ALPHA, MITOCHONDRIAL"/>
    <property type="match status" value="1"/>
</dbReference>
<dbReference type="Pfam" id="PF00006">
    <property type="entry name" value="ATP-synt_ab"/>
    <property type="match status" value="1"/>
</dbReference>
<dbReference type="Pfam" id="PF00306">
    <property type="entry name" value="ATP-synt_ab_C"/>
    <property type="match status" value="1"/>
</dbReference>
<dbReference type="Pfam" id="PF02874">
    <property type="entry name" value="ATP-synt_ab_N"/>
    <property type="match status" value="1"/>
</dbReference>
<dbReference type="PIRSF" id="PIRSF039088">
    <property type="entry name" value="F_ATPase_subunit_alpha"/>
    <property type="match status" value="1"/>
</dbReference>
<dbReference type="SUPFAM" id="SSF47917">
    <property type="entry name" value="C-terminal domain of alpha and beta subunits of F1 ATP synthase"/>
    <property type="match status" value="1"/>
</dbReference>
<dbReference type="SUPFAM" id="SSF50615">
    <property type="entry name" value="N-terminal domain of alpha and beta subunits of F1 ATP synthase"/>
    <property type="match status" value="1"/>
</dbReference>
<dbReference type="SUPFAM" id="SSF52540">
    <property type="entry name" value="P-loop containing nucleoside triphosphate hydrolases"/>
    <property type="match status" value="1"/>
</dbReference>
<dbReference type="PROSITE" id="PS00152">
    <property type="entry name" value="ATPASE_ALPHA_BETA"/>
    <property type="match status" value="1"/>
</dbReference>
<organism>
    <name type="scientific">Anaplasma marginale (strain St. Maries)</name>
    <dbReference type="NCBI Taxonomy" id="234826"/>
    <lineage>
        <taxon>Bacteria</taxon>
        <taxon>Pseudomonadati</taxon>
        <taxon>Pseudomonadota</taxon>
        <taxon>Alphaproteobacteria</taxon>
        <taxon>Rickettsiales</taxon>
        <taxon>Anaplasmataceae</taxon>
        <taxon>Anaplasma</taxon>
    </lineage>
</organism>
<protein>
    <recommendedName>
        <fullName evidence="1">ATP synthase subunit alpha</fullName>
        <ecNumber evidence="1">7.1.2.2</ecNumber>
    </recommendedName>
    <alternativeName>
        <fullName evidence="1">ATP synthase F1 sector subunit alpha</fullName>
    </alternativeName>
    <alternativeName>
        <fullName evidence="1">F-ATPase subunit alpha</fullName>
    </alternativeName>
</protein>
<reference key="1">
    <citation type="journal article" date="2005" name="Proc. Natl. Acad. Sci. U.S.A.">
        <title>Complete genome sequencing of Anaplasma marginale reveals that the surface is skewed to two superfamilies of outer membrane proteins.</title>
        <authorList>
            <person name="Brayton K.A."/>
            <person name="Kappmeyer L.S."/>
            <person name="Herndon D.R."/>
            <person name="Dark M.J."/>
            <person name="Tibbals D.L."/>
            <person name="Palmer G.H."/>
            <person name="McGuire T.C."/>
            <person name="Knowles D.P. Jr."/>
        </authorList>
    </citation>
    <scope>NUCLEOTIDE SEQUENCE [LARGE SCALE GENOMIC DNA]</scope>
    <source>
        <strain>St. Maries</strain>
    </source>
</reference>
<evidence type="ECO:0000255" key="1">
    <source>
        <dbReference type="HAMAP-Rule" id="MF_01346"/>
    </source>
</evidence>
<name>ATPA_ANAMM</name>
<sequence length="507" mass="54246">MSIVSSGDILKILKERIEGFDSPVKTSSVGDVVAIKDGIALVYGLSGVKFGETVAFSSGVRGVVAGLERDTCSVVVFGEDREIREGDSVQCTGELMTVPAGLSVLGRVVNPLGSPVDGGNAIVADSRLPVEAKAPGIMARQPVCEPLQTGIKTVDMLIPIGRGQRELVIGDRKTGKTAIALDTIINQKKTNDTADAKNRMYCIYVAIGQKNSSIARVVHKLKETGAMDYTIVVAAGASDPVSIQYLAPYAACAMGEFFRDNGMHCLIVYDDLSKHAVAYRQMSLLLRRPPGREAYPGDVFYIHSRLLERAAKLSDDLGGGSLTALPIIETQAGDVSAYIPTNVISITDGQIFLESELFHKGFRPAINVGLSVSRVGSAAQVKSVKKVAGSMKLTLAQYRELEDFARFGSDLDPSSQAMLEKGRRFMELLKQGQYSPLSVEEQVAVVLAGADDCVNGIPVSEISKFERGLLERLRAEHGGLMSSLSADIADDIKGKLLEVIRGFAASF</sequence>
<comment type="function">
    <text evidence="1">Produces ATP from ADP in the presence of a proton gradient across the membrane. The alpha chain is a regulatory subunit.</text>
</comment>
<comment type="catalytic activity">
    <reaction evidence="1">
        <text>ATP + H2O + 4 H(+)(in) = ADP + phosphate + 5 H(+)(out)</text>
        <dbReference type="Rhea" id="RHEA:57720"/>
        <dbReference type="ChEBI" id="CHEBI:15377"/>
        <dbReference type="ChEBI" id="CHEBI:15378"/>
        <dbReference type="ChEBI" id="CHEBI:30616"/>
        <dbReference type="ChEBI" id="CHEBI:43474"/>
        <dbReference type="ChEBI" id="CHEBI:456216"/>
        <dbReference type="EC" id="7.1.2.2"/>
    </reaction>
</comment>
<comment type="subunit">
    <text evidence="1">F-type ATPases have 2 components, CF(1) - the catalytic core - and CF(0) - the membrane proton channel. CF(1) has five subunits: alpha(3), beta(3), gamma(1), delta(1), epsilon(1). CF(0) has three main subunits: a(1), b(2) and c(9-12). The alpha and beta chains form an alternating ring which encloses part of the gamma chain. CF(1) is attached to CF(0) by a central stalk formed by the gamma and epsilon chains, while a peripheral stalk is formed by the delta and b chains.</text>
</comment>
<comment type="subcellular location">
    <subcellularLocation>
        <location evidence="1">Cell inner membrane</location>
        <topology evidence="1">Peripheral membrane protein</topology>
    </subcellularLocation>
</comment>
<comment type="similarity">
    <text evidence="1">Belongs to the ATPase alpha/beta chains family.</text>
</comment>